<protein>
    <recommendedName>
        <fullName evidence="1">Probable M18 family aminopeptidase 2</fullName>
        <ecNumber evidence="1">3.4.11.-</ecNumber>
    </recommendedName>
</protein>
<gene>
    <name evidence="1" type="primary">apeB</name>
    <name type="ordered locus">PFLU_4373</name>
</gene>
<accession>C3K0D7</accession>
<reference key="1">
    <citation type="journal article" date="2009" name="Genome Biol.">
        <title>Genomic and genetic analyses of diversity and plant interactions of Pseudomonas fluorescens.</title>
        <authorList>
            <person name="Silby M.W."/>
            <person name="Cerdeno-Tarraga A.M."/>
            <person name="Vernikos G.S."/>
            <person name="Giddens S.R."/>
            <person name="Jackson R.W."/>
            <person name="Preston G.M."/>
            <person name="Zhang X.-X."/>
            <person name="Moon C.D."/>
            <person name="Gehrig S.M."/>
            <person name="Godfrey S.A.C."/>
            <person name="Knight C.G."/>
            <person name="Malone J.G."/>
            <person name="Robinson Z."/>
            <person name="Spiers A.J."/>
            <person name="Harris S."/>
            <person name="Challis G.L."/>
            <person name="Yaxley A.M."/>
            <person name="Harris D."/>
            <person name="Seeger K."/>
            <person name="Murphy L."/>
            <person name="Rutter S."/>
            <person name="Squares R."/>
            <person name="Quail M.A."/>
            <person name="Saunders E."/>
            <person name="Mavromatis K."/>
            <person name="Brettin T.S."/>
            <person name="Bentley S.D."/>
            <person name="Hothersall J."/>
            <person name="Stephens E."/>
            <person name="Thomas C.M."/>
            <person name="Parkhill J."/>
            <person name="Levy S.B."/>
            <person name="Rainey P.B."/>
            <person name="Thomson N.R."/>
        </authorList>
    </citation>
    <scope>NUCLEOTIDE SEQUENCE [LARGE SCALE GENOMIC DNA]</scope>
    <source>
        <strain>SBW25</strain>
    </source>
</reference>
<proteinExistence type="inferred from homology"/>
<name>APEB_PSEFS</name>
<evidence type="ECO:0000255" key="1">
    <source>
        <dbReference type="HAMAP-Rule" id="MF_00467"/>
    </source>
</evidence>
<dbReference type="EC" id="3.4.11.-" evidence="1"/>
<dbReference type="EMBL" id="AM181176">
    <property type="protein sequence ID" value="CAY51001.1"/>
    <property type="molecule type" value="Genomic_DNA"/>
</dbReference>
<dbReference type="RefSeq" id="WP_015885134.1">
    <property type="nucleotide sequence ID" value="NC_012660.1"/>
</dbReference>
<dbReference type="SMR" id="C3K0D7"/>
<dbReference type="STRING" id="294.SRM1_01769"/>
<dbReference type="PATRIC" id="fig|216595.4.peg.4517"/>
<dbReference type="eggNOG" id="COG1362">
    <property type="taxonomic scope" value="Bacteria"/>
</dbReference>
<dbReference type="HOGENOM" id="CLU_019532_2_0_6"/>
<dbReference type="OrthoDB" id="5288740at2"/>
<dbReference type="GO" id="GO:0005737">
    <property type="term" value="C:cytoplasm"/>
    <property type="evidence" value="ECO:0007669"/>
    <property type="project" value="UniProtKB-ARBA"/>
</dbReference>
<dbReference type="GO" id="GO:0004177">
    <property type="term" value="F:aminopeptidase activity"/>
    <property type="evidence" value="ECO:0007669"/>
    <property type="project" value="UniProtKB-UniRule"/>
</dbReference>
<dbReference type="GO" id="GO:0008237">
    <property type="term" value="F:metallopeptidase activity"/>
    <property type="evidence" value="ECO:0007669"/>
    <property type="project" value="UniProtKB-UniRule"/>
</dbReference>
<dbReference type="GO" id="GO:0008270">
    <property type="term" value="F:zinc ion binding"/>
    <property type="evidence" value="ECO:0007669"/>
    <property type="project" value="UniProtKB-UniRule"/>
</dbReference>
<dbReference type="GO" id="GO:0006508">
    <property type="term" value="P:proteolysis"/>
    <property type="evidence" value="ECO:0007669"/>
    <property type="project" value="UniProtKB-UniRule"/>
</dbReference>
<dbReference type="CDD" id="cd05658">
    <property type="entry name" value="M18_DAP"/>
    <property type="match status" value="1"/>
</dbReference>
<dbReference type="FunFam" id="2.30.250.10:FF:000003">
    <property type="entry name" value="Probable M18 family aminopeptidase 2"/>
    <property type="match status" value="1"/>
</dbReference>
<dbReference type="Gene3D" id="2.30.250.10">
    <property type="entry name" value="Aminopeptidase i, Domain 2"/>
    <property type="match status" value="1"/>
</dbReference>
<dbReference type="Gene3D" id="3.40.630.10">
    <property type="entry name" value="Zn peptidases"/>
    <property type="match status" value="1"/>
</dbReference>
<dbReference type="HAMAP" id="MF_00467">
    <property type="entry name" value="Aminopeptidase_M18_2"/>
    <property type="match status" value="1"/>
</dbReference>
<dbReference type="InterPro" id="IPR022984">
    <property type="entry name" value="M18_aminopeptidase_2"/>
</dbReference>
<dbReference type="InterPro" id="IPR001948">
    <property type="entry name" value="Peptidase_M18"/>
</dbReference>
<dbReference type="InterPro" id="IPR023358">
    <property type="entry name" value="Peptidase_M18_dom2"/>
</dbReference>
<dbReference type="NCBIfam" id="NF002759">
    <property type="entry name" value="PRK02813.1"/>
    <property type="match status" value="1"/>
</dbReference>
<dbReference type="PANTHER" id="PTHR28570">
    <property type="entry name" value="ASPARTYL AMINOPEPTIDASE"/>
    <property type="match status" value="1"/>
</dbReference>
<dbReference type="PANTHER" id="PTHR28570:SF3">
    <property type="entry name" value="ASPARTYL AMINOPEPTIDASE"/>
    <property type="match status" value="1"/>
</dbReference>
<dbReference type="Pfam" id="PF02127">
    <property type="entry name" value="Peptidase_M18"/>
    <property type="match status" value="1"/>
</dbReference>
<dbReference type="PRINTS" id="PR00932">
    <property type="entry name" value="AMINO1PTASE"/>
</dbReference>
<dbReference type="SUPFAM" id="SSF101821">
    <property type="entry name" value="Aminopeptidase/glucanase lid domain"/>
    <property type="match status" value="1"/>
</dbReference>
<dbReference type="SUPFAM" id="SSF53187">
    <property type="entry name" value="Zn-dependent exopeptidases"/>
    <property type="match status" value="1"/>
</dbReference>
<keyword id="KW-0031">Aminopeptidase</keyword>
<keyword id="KW-0378">Hydrolase</keyword>
<keyword id="KW-0479">Metal-binding</keyword>
<keyword id="KW-0482">Metalloprotease</keyword>
<keyword id="KW-0645">Protease</keyword>
<keyword id="KW-0862">Zinc</keyword>
<sequence length="429" mass="46943">MREALNQGLIDFLKASPTPFHATAALAQRLEAAGYQRLDERETWTTEPNGRYYVTRNDSSIIAFKLGRHSPLQGGIRLVGAHTDSPCLRVKPQPELQRQGFWQLGVEVYGGALLAPWFDRDLSLAGRVTFRRDGKVESQLIDFKLPIAIIPNLAIHLNREANQGWAINAQTELPPILAQFAGDERVDFRAVLTDQLAREHGLNADVVLDYELSFYDTQSAAVIGLNGDFIAGARLDNLLSCYAGLQALLTSETDETCVLVCNDHEEVGSCSACGADGPMLEQTLRRLLPEGDEFVRTIQKSLLVSADNAHGVHPNYAEKHDANHGPKLNAGPVIKVNSNQRYATNSETAGFFRHLCMAQEVPVQSFVVRSDMGCGSTIGPITASHLGVRTVDIGLPTFAMHSIRELCGSHDLAHLVKVLGAFYASHDLP</sequence>
<feature type="chain" id="PRO_1000206331" description="Probable M18 family aminopeptidase 2">
    <location>
        <begin position="1"/>
        <end position="429"/>
    </location>
</feature>
<feature type="binding site" evidence="1">
    <location>
        <position position="82"/>
    </location>
    <ligand>
        <name>Zn(2+)</name>
        <dbReference type="ChEBI" id="CHEBI:29105"/>
    </ligand>
</feature>
<feature type="binding site" evidence="1">
    <location>
        <position position="156"/>
    </location>
    <ligand>
        <name>Zn(2+)</name>
        <dbReference type="ChEBI" id="CHEBI:29105"/>
    </ligand>
</feature>
<feature type="binding site" evidence="1">
    <location>
        <position position="401"/>
    </location>
    <ligand>
        <name>Zn(2+)</name>
        <dbReference type="ChEBI" id="CHEBI:29105"/>
    </ligand>
</feature>
<comment type="cofactor">
    <cofactor evidence="1">
        <name>Zn(2+)</name>
        <dbReference type="ChEBI" id="CHEBI:29105"/>
    </cofactor>
</comment>
<comment type="similarity">
    <text evidence="1">Belongs to the peptidase M18 family.</text>
</comment>
<organism>
    <name type="scientific">Pseudomonas fluorescens (strain SBW25)</name>
    <dbReference type="NCBI Taxonomy" id="216595"/>
    <lineage>
        <taxon>Bacteria</taxon>
        <taxon>Pseudomonadati</taxon>
        <taxon>Pseudomonadota</taxon>
        <taxon>Gammaproteobacteria</taxon>
        <taxon>Pseudomonadales</taxon>
        <taxon>Pseudomonadaceae</taxon>
        <taxon>Pseudomonas</taxon>
    </lineage>
</organism>